<sequence length="293" mass="33827">MEVIEGKMPFMGYETYYRIVGRRSEKTPLVLLHGGPGSSHNYFEVLDKLAEIDNRRIIMYDQLGCGKSSIPDDHPELYTKETWVKELMALREHLALRKIHLLGQSWGGMLALIYMCDYHPVGIQSLILSSTLSSASLWSKELHRMIKYLPIEEQAAIHRAELTSNFNDPDYLKANEHFMNQHAIDMTKTWPECVMRKKCGGIVAYETAWGPNEYTPEGNLHDYEYTEKLGKIKIPTLITSGTDDLCTPYVAKTMQDHLAGSKWQLFENCGHMSFVEKTDEYVEMLRKWLDQHD</sequence>
<keyword id="KW-0031">Aminopeptidase</keyword>
<keyword id="KW-0378">Hydrolase</keyword>
<keyword id="KW-0645">Protease</keyword>
<dbReference type="EC" id="3.4.11.5"/>
<dbReference type="EMBL" id="FN692037">
    <property type="protein sequence ID" value="CBL49528.1"/>
    <property type="molecule type" value="Genomic_DNA"/>
</dbReference>
<dbReference type="RefSeq" id="WP_013085645.1">
    <property type="nucleotide sequence ID" value="NC_014106.1"/>
</dbReference>
<dbReference type="SMR" id="D5H0J3"/>
<dbReference type="ESTHER" id="laccs-pip">
    <property type="family name" value="Proline_iminopeptidase"/>
</dbReference>
<dbReference type="KEGG" id="lcr:LCRIS_00081"/>
<dbReference type="PATRIC" id="fig|748671.3.peg.74"/>
<dbReference type="eggNOG" id="COG2267">
    <property type="taxonomic scope" value="Bacteria"/>
</dbReference>
<dbReference type="HOGENOM" id="CLU_020336_15_1_9"/>
<dbReference type="Proteomes" id="UP000002371">
    <property type="component" value="Chromosome"/>
</dbReference>
<dbReference type="GO" id="GO:0030313">
    <property type="term" value="C:cell envelope"/>
    <property type="evidence" value="ECO:0007669"/>
    <property type="project" value="UniProtKB-SubCell"/>
</dbReference>
<dbReference type="GO" id="GO:0016020">
    <property type="term" value="C:membrane"/>
    <property type="evidence" value="ECO:0007669"/>
    <property type="project" value="TreeGrafter"/>
</dbReference>
<dbReference type="GO" id="GO:0004177">
    <property type="term" value="F:aminopeptidase activity"/>
    <property type="evidence" value="ECO:0007669"/>
    <property type="project" value="UniProtKB-KW"/>
</dbReference>
<dbReference type="GO" id="GO:0006508">
    <property type="term" value="P:proteolysis"/>
    <property type="evidence" value="ECO:0007669"/>
    <property type="project" value="UniProtKB-KW"/>
</dbReference>
<dbReference type="Gene3D" id="3.40.50.1820">
    <property type="entry name" value="alpha/beta hydrolase"/>
    <property type="match status" value="1"/>
</dbReference>
<dbReference type="InterPro" id="IPR000073">
    <property type="entry name" value="AB_hydrolase_1"/>
</dbReference>
<dbReference type="InterPro" id="IPR029058">
    <property type="entry name" value="AB_hydrolase_fold"/>
</dbReference>
<dbReference type="InterPro" id="IPR050266">
    <property type="entry name" value="AB_hydrolase_sf"/>
</dbReference>
<dbReference type="InterPro" id="IPR002410">
    <property type="entry name" value="Peptidase_S33"/>
</dbReference>
<dbReference type="InterPro" id="IPR005945">
    <property type="entry name" value="Pro_imino_pep"/>
</dbReference>
<dbReference type="NCBIfam" id="TIGR01250">
    <property type="entry name" value="pro_imino_pep_2"/>
    <property type="match status" value="1"/>
</dbReference>
<dbReference type="NCBIfam" id="NF045945">
    <property type="entry name" value="ProImpepLactob"/>
    <property type="match status" value="1"/>
</dbReference>
<dbReference type="PANTHER" id="PTHR43798:SF33">
    <property type="entry name" value="HYDROLASE, PUTATIVE (AFU_ORTHOLOGUE AFUA_2G14860)-RELATED"/>
    <property type="match status" value="1"/>
</dbReference>
<dbReference type="PANTHER" id="PTHR43798">
    <property type="entry name" value="MONOACYLGLYCEROL LIPASE"/>
    <property type="match status" value="1"/>
</dbReference>
<dbReference type="Pfam" id="PF00561">
    <property type="entry name" value="Abhydrolase_1"/>
    <property type="match status" value="1"/>
</dbReference>
<dbReference type="PIRSF" id="PIRSF005539">
    <property type="entry name" value="Pept_S33_TRI_F1"/>
    <property type="match status" value="1"/>
</dbReference>
<dbReference type="PRINTS" id="PR00793">
    <property type="entry name" value="PROAMNOPTASE"/>
</dbReference>
<dbReference type="SUPFAM" id="SSF53474">
    <property type="entry name" value="alpha/beta-Hydrolases"/>
    <property type="match status" value="1"/>
</dbReference>
<reference evidence="6" key="1">
    <citation type="journal article" date="2010" name="J. Bacteriol.">
        <title>Genome sequence of Lactobacillus crispatus ST1.</title>
        <authorList>
            <person name="Ojala T."/>
            <person name="Kuparinen V."/>
            <person name="Koskinen J.P."/>
            <person name="Alatalo E."/>
            <person name="Holm L."/>
            <person name="Auvinen P."/>
            <person name="Edelman S."/>
            <person name="Westerlund-Wikstrom B."/>
            <person name="Korhonen T.K."/>
            <person name="Paulin L."/>
            <person name="Kankainen M."/>
        </authorList>
    </citation>
    <scope>NUCLEOTIDE SEQUENCE [LARGE SCALE GENOMIC DNA]</scope>
    <source>
        <strain>ST1</strain>
    </source>
</reference>
<protein>
    <recommendedName>
        <fullName evidence="6">Proline iminopeptidase</fullName>
        <shortName evidence="3">PIP</shortName>
        <ecNumber>3.4.11.5</ecNumber>
    </recommendedName>
    <alternativeName>
        <fullName evidence="3">Prolyl aminopeptidase</fullName>
        <shortName evidence="3">PAP</shortName>
    </alternativeName>
</protein>
<accession>D5H0J3</accession>
<proteinExistence type="inferred from homology"/>
<comment type="function">
    <text evidence="3">Releases the N-terminal proline from various substrates.</text>
</comment>
<comment type="catalytic activity">
    <reaction evidence="3">
        <text>Release of N-terminal proline from a peptide.</text>
        <dbReference type="EC" id="3.4.11.5"/>
    </reaction>
</comment>
<comment type="subcellular location">
    <subcellularLocation>
        <location evidence="1">Cell envelope</location>
    </subcellularLocation>
</comment>
<comment type="similarity">
    <text evidence="5">Belongs to the peptidase S33 family.</text>
</comment>
<feature type="chain" id="PRO_0000406323" description="Proline iminopeptidase">
    <location>
        <begin position="1"/>
        <end position="293"/>
    </location>
</feature>
<feature type="domain" description="AB hydrolase-1" evidence="5">
    <location>
        <begin position="28"/>
        <end position="277"/>
    </location>
</feature>
<feature type="active site" description="Nucleophile" evidence="4">
    <location>
        <position position="105"/>
    </location>
</feature>
<feature type="active site" evidence="2">
    <location>
        <position position="244"/>
    </location>
</feature>
<feature type="active site" description="Proton donor" evidence="4">
    <location>
        <position position="271"/>
    </location>
</feature>
<evidence type="ECO:0000250" key="1"/>
<evidence type="ECO:0000250" key="2">
    <source>
        <dbReference type="UniProtKB" id="O32449"/>
    </source>
</evidence>
<evidence type="ECO:0000250" key="3">
    <source>
        <dbReference type="UniProtKB" id="P52278"/>
    </source>
</evidence>
<evidence type="ECO:0000250" key="4">
    <source>
        <dbReference type="UniProtKB" id="P96084"/>
    </source>
</evidence>
<evidence type="ECO:0000255" key="5"/>
<evidence type="ECO:0000312" key="6">
    <source>
        <dbReference type="EMBL" id="CBL49528.1"/>
    </source>
</evidence>
<gene>
    <name evidence="3" type="primary">pip</name>
    <name evidence="6" type="synonym">pepI</name>
    <name type="ordered locus">LCRIS_00081</name>
</gene>
<organism>
    <name type="scientific">Lactobacillus crispatus (strain ST1)</name>
    <dbReference type="NCBI Taxonomy" id="748671"/>
    <lineage>
        <taxon>Bacteria</taxon>
        <taxon>Bacillati</taxon>
        <taxon>Bacillota</taxon>
        <taxon>Bacilli</taxon>
        <taxon>Lactobacillales</taxon>
        <taxon>Lactobacillaceae</taxon>
        <taxon>Lactobacillus</taxon>
    </lineage>
</organism>
<name>PIP_LACCS</name>